<feature type="chain" id="PRO_1000058284" description="Queuine tRNA-ribosyltransferase">
    <location>
        <begin position="1"/>
        <end position="387"/>
    </location>
</feature>
<feature type="region of interest" description="RNA binding" evidence="1">
    <location>
        <begin position="263"/>
        <end position="269"/>
    </location>
</feature>
<feature type="region of interest" description="RNA binding; important for wobble base 34 recognition" evidence="1">
    <location>
        <begin position="287"/>
        <end position="291"/>
    </location>
</feature>
<feature type="active site" description="Proton acceptor" evidence="1">
    <location>
        <position position="102"/>
    </location>
</feature>
<feature type="active site" description="Nucleophile" evidence="1">
    <location>
        <position position="282"/>
    </location>
</feature>
<feature type="binding site" evidence="1">
    <location>
        <begin position="102"/>
        <end position="106"/>
    </location>
    <ligand>
        <name>substrate</name>
    </ligand>
</feature>
<feature type="binding site" evidence="1">
    <location>
        <position position="156"/>
    </location>
    <ligand>
        <name>substrate</name>
    </ligand>
</feature>
<feature type="binding site" evidence="1">
    <location>
        <position position="205"/>
    </location>
    <ligand>
        <name>substrate</name>
    </ligand>
</feature>
<feature type="binding site" evidence="1">
    <location>
        <position position="232"/>
    </location>
    <ligand>
        <name>substrate</name>
    </ligand>
</feature>
<feature type="binding site" evidence="1">
    <location>
        <position position="320"/>
    </location>
    <ligand>
        <name>Zn(2+)</name>
        <dbReference type="ChEBI" id="CHEBI:29105"/>
    </ligand>
</feature>
<feature type="binding site" evidence="1">
    <location>
        <position position="322"/>
    </location>
    <ligand>
        <name>Zn(2+)</name>
        <dbReference type="ChEBI" id="CHEBI:29105"/>
    </ligand>
</feature>
<feature type="binding site" evidence="1">
    <location>
        <position position="325"/>
    </location>
    <ligand>
        <name>Zn(2+)</name>
        <dbReference type="ChEBI" id="CHEBI:29105"/>
    </ligand>
</feature>
<feature type="binding site" evidence="1">
    <location>
        <position position="351"/>
    </location>
    <ligand>
        <name>Zn(2+)</name>
        <dbReference type="ChEBI" id="CHEBI:29105"/>
    </ligand>
</feature>
<proteinExistence type="inferred from homology"/>
<reference key="1">
    <citation type="journal article" date="2009" name="Environ. Microbiol.">
        <title>The genome of Polaromonas naphthalenivorans strain CJ2, isolated from coal tar-contaminated sediment, reveals physiological and metabolic versatility and evolution through extensive horizontal gene transfer.</title>
        <authorList>
            <person name="Yagi J.M."/>
            <person name="Sims D."/>
            <person name="Brettin T."/>
            <person name="Bruce D."/>
            <person name="Madsen E.L."/>
        </authorList>
    </citation>
    <scope>NUCLEOTIDE SEQUENCE [LARGE SCALE GENOMIC DNA]</scope>
    <source>
        <strain>CJ2</strain>
    </source>
</reference>
<dbReference type="EC" id="2.4.2.29" evidence="1"/>
<dbReference type="EMBL" id="CP000529">
    <property type="protein sequence ID" value="ABM35643.1"/>
    <property type="molecule type" value="Genomic_DNA"/>
</dbReference>
<dbReference type="RefSeq" id="WP_011799750.1">
    <property type="nucleotide sequence ID" value="NC_008781.1"/>
</dbReference>
<dbReference type="SMR" id="A1VJ15"/>
<dbReference type="STRING" id="365044.Pnap_0320"/>
<dbReference type="KEGG" id="pna:Pnap_0320"/>
<dbReference type="eggNOG" id="COG0343">
    <property type="taxonomic scope" value="Bacteria"/>
</dbReference>
<dbReference type="HOGENOM" id="CLU_022060_0_1_4"/>
<dbReference type="OrthoDB" id="9805417at2"/>
<dbReference type="UniPathway" id="UPA00392"/>
<dbReference type="Proteomes" id="UP000000644">
    <property type="component" value="Chromosome"/>
</dbReference>
<dbReference type="GO" id="GO:0005829">
    <property type="term" value="C:cytosol"/>
    <property type="evidence" value="ECO:0007669"/>
    <property type="project" value="TreeGrafter"/>
</dbReference>
<dbReference type="GO" id="GO:0046872">
    <property type="term" value="F:metal ion binding"/>
    <property type="evidence" value="ECO:0007669"/>
    <property type="project" value="UniProtKB-KW"/>
</dbReference>
<dbReference type="GO" id="GO:0008479">
    <property type="term" value="F:tRNA-guanosine(34) queuine transglycosylase activity"/>
    <property type="evidence" value="ECO:0007669"/>
    <property type="project" value="UniProtKB-UniRule"/>
</dbReference>
<dbReference type="GO" id="GO:0008616">
    <property type="term" value="P:queuosine biosynthetic process"/>
    <property type="evidence" value="ECO:0007669"/>
    <property type="project" value="UniProtKB-UniRule"/>
</dbReference>
<dbReference type="GO" id="GO:0002099">
    <property type="term" value="P:tRNA wobble guanine modification"/>
    <property type="evidence" value="ECO:0007669"/>
    <property type="project" value="TreeGrafter"/>
</dbReference>
<dbReference type="GO" id="GO:0101030">
    <property type="term" value="P:tRNA-guanine transglycosylation"/>
    <property type="evidence" value="ECO:0007669"/>
    <property type="project" value="InterPro"/>
</dbReference>
<dbReference type="FunFam" id="3.20.20.105:FF:000001">
    <property type="entry name" value="Queuine tRNA-ribosyltransferase"/>
    <property type="match status" value="1"/>
</dbReference>
<dbReference type="Gene3D" id="3.20.20.105">
    <property type="entry name" value="Queuine tRNA-ribosyltransferase-like"/>
    <property type="match status" value="1"/>
</dbReference>
<dbReference type="HAMAP" id="MF_00168">
    <property type="entry name" value="Q_tRNA_Tgt"/>
    <property type="match status" value="1"/>
</dbReference>
<dbReference type="InterPro" id="IPR050076">
    <property type="entry name" value="ArchSynthase1/Queuine_TRR"/>
</dbReference>
<dbReference type="InterPro" id="IPR004803">
    <property type="entry name" value="TGT"/>
</dbReference>
<dbReference type="InterPro" id="IPR036511">
    <property type="entry name" value="TGT-like_sf"/>
</dbReference>
<dbReference type="InterPro" id="IPR002616">
    <property type="entry name" value="tRNA_ribo_trans-like"/>
</dbReference>
<dbReference type="NCBIfam" id="TIGR00430">
    <property type="entry name" value="Q_tRNA_tgt"/>
    <property type="match status" value="1"/>
</dbReference>
<dbReference type="NCBIfam" id="TIGR00449">
    <property type="entry name" value="tgt_general"/>
    <property type="match status" value="1"/>
</dbReference>
<dbReference type="PANTHER" id="PTHR46499">
    <property type="entry name" value="QUEUINE TRNA-RIBOSYLTRANSFERASE"/>
    <property type="match status" value="1"/>
</dbReference>
<dbReference type="PANTHER" id="PTHR46499:SF1">
    <property type="entry name" value="QUEUINE TRNA-RIBOSYLTRANSFERASE"/>
    <property type="match status" value="1"/>
</dbReference>
<dbReference type="Pfam" id="PF01702">
    <property type="entry name" value="TGT"/>
    <property type="match status" value="1"/>
</dbReference>
<dbReference type="SUPFAM" id="SSF51713">
    <property type="entry name" value="tRNA-guanine transglycosylase"/>
    <property type="match status" value="1"/>
</dbReference>
<comment type="function">
    <text evidence="1">Catalyzes the base-exchange of a guanine (G) residue with the queuine precursor 7-aminomethyl-7-deazaguanine (PreQ1) at position 34 (anticodon wobble position) in tRNAs with GU(N) anticodons (tRNA-Asp, -Asn, -His and -Tyr). Catalysis occurs through a double-displacement mechanism. The nucleophile active site attacks the C1' of nucleotide 34 to detach the guanine base from the RNA, forming a covalent enzyme-RNA intermediate. The proton acceptor active site deprotonates the incoming PreQ1, allowing a nucleophilic attack on the C1' of the ribose to form the product. After dissociation, two additional enzymatic reactions on the tRNA convert PreQ1 to queuine (Q), resulting in the hypermodified nucleoside queuosine (7-(((4,5-cis-dihydroxy-2-cyclopenten-1-yl)amino)methyl)-7-deazaguanosine).</text>
</comment>
<comment type="catalytic activity">
    <reaction evidence="1">
        <text>7-aminomethyl-7-carbaguanine + guanosine(34) in tRNA = 7-aminomethyl-7-carbaguanosine(34) in tRNA + guanine</text>
        <dbReference type="Rhea" id="RHEA:24104"/>
        <dbReference type="Rhea" id="RHEA-COMP:10341"/>
        <dbReference type="Rhea" id="RHEA-COMP:10342"/>
        <dbReference type="ChEBI" id="CHEBI:16235"/>
        <dbReference type="ChEBI" id="CHEBI:58703"/>
        <dbReference type="ChEBI" id="CHEBI:74269"/>
        <dbReference type="ChEBI" id="CHEBI:82833"/>
        <dbReference type="EC" id="2.4.2.29"/>
    </reaction>
</comment>
<comment type="cofactor">
    <cofactor evidence="1">
        <name>Zn(2+)</name>
        <dbReference type="ChEBI" id="CHEBI:29105"/>
    </cofactor>
    <text evidence="1">Binds 1 zinc ion per subunit.</text>
</comment>
<comment type="pathway">
    <text evidence="1">tRNA modification; tRNA-queuosine biosynthesis.</text>
</comment>
<comment type="subunit">
    <text evidence="1">Homodimer. Within each dimer, one monomer is responsible for RNA recognition and catalysis, while the other monomer binds to the replacement base PreQ1.</text>
</comment>
<comment type="similarity">
    <text evidence="1">Belongs to the queuine tRNA-ribosyltransferase family.</text>
</comment>
<organism>
    <name type="scientific">Polaromonas naphthalenivorans (strain CJ2)</name>
    <dbReference type="NCBI Taxonomy" id="365044"/>
    <lineage>
        <taxon>Bacteria</taxon>
        <taxon>Pseudomonadati</taxon>
        <taxon>Pseudomonadota</taxon>
        <taxon>Betaproteobacteria</taxon>
        <taxon>Burkholderiales</taxon>
        <taxon>Comamonadaceae</taxon>
        <taxon>Polaromonas</taxon>
    </lineage>
</organism>
<evidence type="ECO:0000255" key="1">
    <source>
        <dbReference type="HAMAP-Rule" id="MF_00168"/>
    </source>
</evidence>
<keyword id="KW-0328">Glycosyltransferase</keyword>
<keyword id="KW-0479">Metal-binding</keyword>
<keyword id="KW-0671">Queuosine biosynthesis</keyword>
<keyword id="KW-1185">Reference proteome</keyword>
<keyword id="KW-0808">Transferase</keyword>
<keyword id="KW-0819">tRNA processing</keyword>
<keyword id="KW-0862">Zinc</keyword>
<gene>
    <name evidence="1" type="primary">tgt</name>
    <name type="ordered locus">Pnap_0320</name>
</gene>
<accession>A1VJ15</accession>
<sequence>MLEFEVLKTDPATVDSEGAYLGSYARRGQLTLNHGVVQTPIFMPVGTYGTVKGVTPQSLHDMNAQIILGNTFHLWMRPGLDVVAQFGGLHKFESWHKPILTDSGGFQVWSLGEMRKISEEGVKFASPVNGDKLFLTPEISMQIQTLLNSDIVMQFDECTPYDTKGHITTEGEARSSMELSRRWAKRCEIEFDKLENPNALFGIVQGGMFENLRQESLDALVEMDFPGYAVGGVSVGEPKEEMLRIMAHTPHRLPAHKPRYLMGVGTPEDLVEGVASGVDMFDCVMPTRNARNGHMFTRFGDLKIRNARYKSEEAPVDSTCGCYTCRNFSRAYMHHLDRCGEMLGPMLSSIHNLHYYLNLMQEVRGALDAGRFGEFVRQFKADRQRGV</sequence>
<name>TGT_POLNA</name>
<protein>
    <recommendedName>
        <fullName evidence="1">Queuine tRNA-ribosyltransferase</fullName>
        <ecNumber evidence="1">2.4.2.29</ecNumber>
    </recommendedName>
    <alternativeName>
        <fullName evidence="1">Guanine insertion enzyme</fullName>
    </alternativeName>
    <alternativeName>
        <fullName evidence="1">tRNA-guanine transglycosylase</fullName>
    </alternativeName>
</protein>